<dbReference type="EC" id="4.1.3.17"/>
<dbReference type="EC" id="4.1.1.112"/>
<dbReference type="EMBL" id="CP000967">
    <property type="protein sequence ID" value="ACD58094.1"/>
    <property type="molecule type" value="Genomic_DNA"/>
</dbReference>
<dbReference type="SMR" id="B2SSI8"/>
<dbReference type="KEGG" id="xop:PXO_04832"/>
<dbReference type="PATRIC" id="fig|291331.8.peg.1721"/>
<dbReference type="eggNOG" id="COG0684">
    <property type="taxonomic scope" value="Bacteria"/>
</dbReference>
<dbReference type="HOGENOM" id="CLU_072626_4_0_6"/>
<dbReference type="Proteomes" id="UP000001740">
    <property type="component" value="Chromosome"/>
</dbReference>
<dbReference type="GO" id="GO:0047443">
    <property type="term" value="F:4-hydroxy-4-methyl-2-oxoglutarate aldolase activity"/>
    <property type="evidence" value="ECO:0007669"/>
    <property type="project" value="UniProtKB-EC"/>
</dbReference>
<dbReference type="GO" id="GO:0046872">
    <property type="term" value="F:metal ion binding"/>
    <property type="evidence" value="ECO:0007669"/>
    <property type="project" value="UniProtKB-KW"/>
</dbReference>
<dbReference type="GO" id="GO:0008948">
    <property type="term" value="F:oxaloacetate decarboxylase activity"/>
    <property type="evidence" value="ECO:0007669"/>
    <property type="project" value="UniProtKB-EC"/>
</dbReference>
<dbReference type="GO" id="GO:0008428">
    <property type="term" value="F:ribonuclease inhibitor activity"/>
    <property type="evidence" value="ECO:0007669"/>
    <property type="project" value="InterPro"/>
</dbReference>
<dbReference type="GO" id="GO:0051252">
    <property type="term" value="P:regulation of RNA metabolic process"/>
    <property type="evidence" value="ECO:0007669"/>
    <property type="project" value="InterPro"/>
</dbReference>
<dbReference type="CDD" id="cd16841">
    <property type="entry name" value="RraA_family"/>
    <property type="match status" value="1"/>
</dbReference>
<dbReference type="Gene3D" id="3.50.30.40">
    <property type="entry name" value="Ribonuclease E inhibitor RraA/RraA-like"/>
    <property type="match status" value="1"/>
</dbReference>
<dbReference type="InterPro" id="IPR010203">
    <property type="entry name" value="RraA"/>
</dbReference>
<dbReference type="InterPro" id="IPR005493">
    <property type="entry name" value="RraA/RraA-like"/>
</dbReference>
<dbReference type="InterPro" id="IPR036704">
    <property type="entry name" value="RraA/RraA-like_sf"/>
</dbReference>
<dbReference type="NCBIfam" id="TIGR01935">
    <property type="entry name" value="NOT-MenG"/>
    <property type="match status" value="1"/>
</dbReference>
<dbReference type="NCBIfam" id="NF006875">
    <property type="entry name" value="PRK09372.1"/>
    <property type="match status" value="1"/>
</dbReference>
<dbReference type="NCBIfam" id="NF009134">
    <property type="entry name" value="PRK12487.1"/>
    <property type="match status" value="1"/>
</dbReference>
<dbReference type="PANTHER" id="PTHR33254">
    <property type="entry name" value="4-HYDROXY-4-METHYL-2-OXOGLUTARATE ALDOLASE 3-RELATED"/>
    <property type="match status" value="1"/>
</dbReference>
<dbReference type="PANTHER" id="PTHR33254:SF29">
    <property type="entry name" value="REGULATOR OF RIBONUCLEASE ACTIVITY A"/>
    <property type="match status" value="1"/>
</dbReference>
<dbReference type="Pfam" id="PF03737">
    <property type="entry name" value="RraA-like"/>
    <property type="match status" value="1"/>
</dbReference>
<dbReference type="SUPFAM" id="SSF89562">
    <property type="entry name" value="RraA-like"/>
    <property type="match status" value="1"/>
</dbReference>
<gene>
    <name type="ordered locus">PXO_04832</name>
</gene>
<proteinExistence type="inferred from homology"/>
<reference key="1">
    <citation type="journal article" date="2008" name="BMC Genomics">
        <title>Genome sequence and rapid evolution of the rice pathogen Xanthomonas oryzae pv. oryzae PXO99A.</title>
        <authorList>
            <person name="Salzberg S.L."/>
            <person name="Sommer D.D."/>
            <person name="Schatz M.C."/>
            <person name="Phillippy A.M."/>
            <person name="Rabinowicz P.D."/>
            <person name="Tsuge S."/>
            <person name="Furutani A."/>
            <person name="Ochiai H."/>
            <person name="Delcher A.L."/>
            <person name="Kelley D."/>
            <person name="Madupu R."/>
            <person name="Puiu D."/>
            <person name="Radune D."/>
            <person name="Shumway M."/>
            <person name="Trapnell C."/>
            <person name="Aparna G."/>
            <person name="Jha G."/>
            <person name="Pandey A."/>
            <person name="Patil P.B."/>
            <person name="Ishihara H."/>
            <person name="Meyer D.F."/>
            <person name="Szurek B."/>
            <person name="Verdier V."/>
            <person name="Koebnik R."/>
            <person name="Dow J.M."/>
            <person name="Ryan R.P."/>
            <person name="Hirata H."/>
            <person name="Tsuyumu S."/>
            <person name="Won Lee S."/>
            <person name="Seo Y.-S."/>
            <person name="Sriariyanum M."/>
            <person name="Ronald P.C."/>
            <person name="Sonti R.V."/>
            <person name="Van Sluys M.-A."/>
            <person name="Leach J.E."/>
            <person name="White F.F."/>
            <person name="Bogdanove A.J."/>
        </authorList>
    </citation>
    <scope>NUCLEOTIDE SEQUENCE [LARGE SCALE GENOMIC DNA]</scope>
    <source>
        <strain>PXO99A</strain>
    </source>
</reference>
<evidence type="ECO:0000250" key="1"/>
<evidence type="ECO:0000305" key="2"/>
<organism>
    <name type="scientific">Xanthomonas oryzae pv. oryzae (strain PXO99A)</name>
    <dbReference type="NCBI Taxonomy" id="360094"/>
    <lineage>
        <taxon>Bacteria</taxon>
        <taxon>Pseudomonadati</taxon>
        <taxon>Pseudomonadota</taxon>
        <taxon>Gammaproteobacteria</taxon>
        <taxon>Lysobacterales</taxon>
        <taxon>Lysobacteraceae</taxon>
        <taxon>Xanthomonas</taxon>
    </lineage>
</organism>
<keyword id="KW-0456">Lyase</keyword>
<keyword id="KW-0479">Metal-binding</keyword>
<accession>B2SSI8</accession>
<name>RRAAH_XANOP</name>
<feature type="chain" id="PRO_1000194881" description="Putative 4-hydroxy-4-methyl-2-oxoglutarate aldolase">
    <location>
        <begin position="1"/>
        <end position="166"/>
    </location>
</feature>
<feature type="binding site" evidence="1">
    <location>
        <begin position="74"/>
        <end position="77"/>
    </location>
    <ligand>
        <name>substrate</name>
    </ligand>
</feature>
<feature type="binding site" evidence="1">
    <location>
        <position position="96"/>
    </location>
    <ligand>
        <name>substrate</name>
    </ligand>
</feature>
<feature type="binding site" evidence="1">
    <location>
        <position position="97"/>
    </location>
    <ligand>
        <name>a divalent metal cation</name>
        <dbReference type="ChEBI" id="CHEBI:60240"/>
    </ligand>
</feature>
<protein>
    <recommendedName>
        <fullName>Putative 4-hydroxy-4-methyl-2-oxoglutarate aldolase</fullName>
        <shortName>HMG aldolase</shortName>
        <ecNumber>4.1.3.17</ecNumber>
    </recommendedName>
    <alternativeName>
        <fullName>Oxaloacetate decarboxylase</fullName>
        <shortName>OAA decarboxylase</shortName>
        <ecNumber>4.1.1.112</ecNumber>
    </alternativeName>
    <alternativeName>
        <fullName>Regulator of ribonuclease activity homolog</fullName>
    </alternativeName>
    <alternativeName>
        <fullName>RraA-like protein</fullName>
    </alternativeName>
</protein>
<sequence>MTWTTPDLCDRYPEVTIAEPPFRHFGGRTVFCGPMVTVRCFEDNSRMRELAATPGDARVLVVDGQGSLKHALLGDQIAANAVANGWAGVLIHGGVRDVEMLASLPLGVLALAACPRRTERRDLGDVDVPVSFAGVPFVPGHWLYADANGVLVSPQPLSLDGASGSI</sequence>
<comment type="function">
    <text evidence="1">Catalyzes the aldol cleavage of 4-hydroxy-4-methyl-2-oxoglutarate (HMG) into 2 molecules of pyruvate. Also contains a secondary oxaloacetate (OAA) decarboxylase activity due to the common pyruvate enolate transition state formed following C-C bond cleavage in the retro-aldol and decarboxylation reactions (By similarity).</text>
</comment>
<comment type="catalytic activity">
    <reaction>
        <text>4-hydroxy-4-methyl-2-oxoglutarate = 2 pyruvate</text>
        <dbReference type="Rhea" id="RHEA:22748"/>
        <dbReference type="ChEBI" id="CHEBI:15361"/>
        <dbReference type="ChEBI" id="CHEBI:58276"/>
        <dbReference type="EC" id="4.1.3.17"/>
    </reaction>
</comment>
<comment type="catalytic activity">
    <reaction>
        <text>oxaloacetate + H(+) = pyruvate + CO2</text>
        <dbReference type="Rhea" id="RHEA:15641"/>
        <dbReference type="ChEBI" id="CHEBI:15361"/>
        <dbReference type="ChEBI" id="CHEBI:15378"/>
        <dbReference type="ChEBI" id="CHEBI:16452"/>
        <dbReference type="ChEBI" id="CHEBI:16526"/>
        <dbReference type="EC" id="4.1.1.112"/>
    </reaction>
</comment>
<comment type="cofactor">
    <cofactor evidence="1">
        <name>a divalent metal cation</name>
        <dbReference type="ChEBI" id="CHEBI:60240"/>
    </cofactor>
    <text evidence="1">Divalent metal cation.</text>
</comment>
<comment type="subunit">
    <text evidence="1">Homotrimer.</text>
</comment>
<comment type="similarity">
    <text evidence="2">Belongs to the class II aldolase/RraA-like family.</text>
</comment>